<protein>
    <recommendedName>
        <fullName>Type II secretion system protein J</fullName>
        <shortName>T2SS protein J</shortName>
    </recommendedName>
    <alternativeName>
        <fullName>Cholera toxin secretion protein EpsJ</fullName>
    </alternativeName>
    <alternativeName>
        <fullName>General secretion pathway protein J</fullName>
    </alternativeName>
</protein>
<keyword id="KW-0002">3D-structure</keyword>
<keyword id="KW-0997">Cell inner membrane</keyword>
<keyword id="KW-1003">Cell membrane</keyword>
<keyword id="KW-0472">Membrane</keyword>
<keyword id="KW-0488">Methylation</keyword>
<keyword id="KW-0812">Transmembrane</keyword>
<keyword id="KW-1133">Transmembrane helix</keyword>
<sequence length="199" mass="22222">MKRTRAGFTLLEMLVAIAIFASLALMAQQVTNGVTRVNSAVADHDQKLNLMQQTMSFLTHDLTQMMPRPVRGDQGQREPALLAGAGVLASESEGMRFVRGGVVNPLMRLPRSNLLTVGYRIHDGYLERLAWPLTDAAGSVKPTMQKLIPADSLRLQFYDGTRWQESWSSVQAIPVAVRMTLHSPQWGEIERIWLLRGPQ</sequence>
<proteinExistence type="evidence at protein level"/>
<gene>
    <name type="primary">gspJ</name>
    <name type="ORF">BvCms2454_02423</name>
</gene>
<dbReference type="EMBL" id="AY056599">
    <property type="protein sequence ID" value="AAL10699.1"/>
    <property type="molecule type" value="Genomic_DNA"/>
</dbReference>
<dbReference type="EMBL" id="BFGA01000032">
    <property type="protein sequence ID" value="GCP05137.1"/>
    <property type="molecule type" value="Genomic_DNA"/>
</dbReference>
<dbReference type="RefSeq" id="WP_112868754.1">
    <property type="nucleotide sequence ID" value="NZ_BFGA01000032.1"/>
</dbReference>
<dbReference type="PDB" id="3CI0">
    <property type="method" value="X-ray"/>
    <property type="resolution" value="2.20 A"/>
    <property type="chains" value="J=26-187"/>
</dbReference>
<dbReference type="PDBsum" id="3CI0"/>
<dbReference type="SMR" id="A0A4C3GMC1"/>
<dbReference type="PATRIC" id="fig|562.10824.peg.3491"/>
<dbReference type="EvolutionaryTrace" id="A0A4C3GMC1"/>
<dbReference type="GO" id="GO:0005886">
    <property type="term" value="C:plasma membrane"/>
    <property type="evidence" value="ECO:0007669"/>
    <property type="project" value="UniProtKB-SubCell"/>
</dbReference>
<dbReference type="GO" id="GO:0015627">
    <property type="term" value="C:type II protein secretion system complex"/>
    <property type="evidence" value="ECO:0007669"/>
    <property type="project" value="InterPro"/>
</dbReference>
<dbReference type="GO" id="GO:0015628">
    <property type="term" value="P:protein secretion by the type II secretion system"/>
    <property type="evidence" value="ECO:0007669"/>
    <property type="project" value="InterPro"/>
</dbReference>
<dbReference type="Gene3D" id="3.10.610.10">
    <property type="entry name" value="GSPII I/J protein-like"/>
    <property type="match status" value="1"/>
</dbReference>
<dbReference type="Gene3D" id="2.10.70.20">
    <property type="entry name" value="gspk-gspi-gspj complex like domains"/>
    <property type="match status" value="1"/>
</dbReference>
<dbReference type="InterPro" id="IPR012902">
    <property type="entry name" value="N_methyl_site"/>
</dbReference>
<dbReference type="InterPro" id="IPR045584">
    <property type="entry name" value="Pilin-like"/>
</dbReference>
<dbReference type="InterPro" id="IPR010055">
    <property type="entry name" value="T2SS_protein-GspJ"/>
</dbReference>
<dbReference type="InterPro" id="IPR051621">
    <property type="entry name" value="T2SS_protein_J"/>
</dbReference>
<dbReference type="NCBIfam" id="TIGR01711">
    <property type="entry name" value="gspJ"/>
    <property type="match status" value="1"/>
</dbReference>
<dbReference type="NCBIfam" id="TIGR02532">
    <property type="entry name" value="IV_pilin_GFxxxE"/>
    <property type="match status" value="1"/>
</dbReference>
<dbReference type="PANTHER" id="PTHR39583:SF2">
    <property type="entry name" value="TYPE II SECRETION SYSTEM PROTEIN J"/>
    <property type="match status" value="1"/>
</dbReference>
<dbReference type="PANTHER" id="PTHR39583">
    <property type="entry name" value="TYPE II SECRETION SYSTEM PROTEIN J-RELATED"/>
    <property type="match status" value="1"/>
</dbReference>
<dbReference type="Pfam" id="PF07963">
    <property type="entry name" value="N_methyl"/>
    <property type="match status" value="1"/>
</dbReference>
<dbReference type="Pfam" id="PF11612">
    <property type="entry name" value="T2SSJ"/>
    <property type="match status" value="1"/>
</dbReference>
<dbReference type="SUPFAM" id="SSF54523">
    <property type="entry name" value="Pili subunits"/>
    <property type="match status" value="1"/>
</dbReference>
<dbReference type="PROSITE" id="PS00409">
    <property type="entry name" value="PROKAR_NTER_METHYL"/>
    <property type="match status" value="1"/>
</dbReference>
<evidence type="ECO:0000250" key="1">
    <source>
        <dbReference type="UniProtKB" id="Q00517"/>
    </source>
</evidence>
<evidence type="ECO:0000255" key="2"/>
<evidence type="ECO:0000255" key="3">
    <source>
        <dbReference type="PROSITE-ProRule" id="PRU01070"/>
    </source>
</evidence>
<evidence type="ECO:0000269" key="4">
    <source>
    </source>
</evidence>
<evidence type="ECO:0000305" key="5"/>
<evidence type="ECO:0007829" key="6">
    <source>
        <dbReference type="PDB" id="3CI0"/>
    </source>
</evidence>
<feature type="propeptide" id="PRO_0000449549" description="Leader sequence" evidence="3">
    <location>
        <begin position="1"/>
        <end position="7"/>
    </location>
</feature>
<feature type="chain" id="PRO_0000449550" description="Type II secretion system protein J">
    <location>
        <begin position="8"/>
        <end position="199"/>
    </location>
</feature>
<feature type="transmembrane region" description="Helical" evidence="5">
    <location>
        <begin position="8"/>
        <end position="27"/>
    </location>
</feature>
<feature type="modified residue" description="N-methylphenylalanine" evidence="3">
    <location>
        <position position="8"/>
    </location>
</feature>
<feature type="helix" evidence="6">
    <location>
        <begin position="47"/>
        <end position="62"/>
    </location>
</feature>
<feature type="strand" evidence="6">
    <location>
        <begin position="80"/>
        <end position="85"/>
    </location>
</feature>
<feature type="helix" evidence="6">
    <location>
        <begin position="87"/>
        <end position="89"/>
    </location>
</feature>
<feature type="strand" evidence="6">
    <location>
        <begin position="91"/>
        <end position="99"/>
    </location>
</feature>
<feature type="strand" evidence="6">
    <location>
        <begin position="115"/>
        <end position="122"/>
    </location>
</feature>
<feature type="strand" evidence="6">
    <location>
        <begin position="125"/>
        <end position="136"/>
    </location>
</feature>
<feature type="strand" evidence="6">
    <location>
        <begin position="143"/>
        <end position="149"/>
    </location>
</feature>
<feature type="strand" evidence="6">
    <location>
        <begin position="153"/>
        <end position="158"/>
    </location>
</feature>
<feature type="strand" evidence="6">
    <location>
        <begin position="163"/>
        <end position="165"/>
    </location>
</feature>
<feature type="strand" evidence="6">
    <location>
        <begin position="175"/>
        <end position="183"/>
    </location>
</feature>
<feature type="turn" evidence="6">
    <location>
        <begin position="184"/>
        <end position="186"/>
    </location>
</feature>
<feature type="strand" evidence="6">
    <location>
        <begin position="187"/>
        <end position="196"/>
    </location>
</feature>
<name>GSPJ_ECOLX</name>
<organism>
    <name type="scientific">Escherichia coli</name>
    <dbReference type="NCBI Taxonomy" id="562"/>
    <lineage>
        <taxon>Bacteria</taxon>
        <taxon>Pseudomonadati</taxon>
        <taxon>Pseudomonadota</taxon>
        <taxon>Gammaproteobacteria</taxon>
        <taxon>Enterobacterales</taxon>
        <taxon>Enterobacteriaceae</taxon>
        <taxon>Escherichia</taxon>
    </lineage>
</organism>
<comment type="function">
    <text evidence="1">Component of the type II secretion system required for the energy-dependent secretion of extracellular factors such as proteases and toxins from the periplasm. Part of the pseudopilus tip complex that is critical for the recognition and binding of secretion substrates.</text>
</comment>
<comment type="subunit">
    <text evidence="1 4">Type II secretion is composed of four main components: the outer membrane complex, the inner membrane complex, the cytoplasmic secretion ATPase and the periplasm-spanning pseudopilus. Interacts with core component GspG (By similarity). Interacts with pseudopilins GspI and GspK (PubMed:18438417).</text>
</comment>
<comment type="subcellular location">
    <subcellularLocation>
        <location evidence="1">Cell inner membrane</location>
        <topology evidence="2">Single-pass membrane protein</topology>
    </subcellularLocation>
</comment>
<comment type="PTM">
    <text evidence="1">Cleaved by prepilin peptidase.</text>
</comment>
<comment type="PTM">
    <text evidence="1">Methylated by prepilin peptidase at the amino group of the N-terminal phenylalanine once the leader sequence is cleaved by prepilin peptidase.</text>
</comment>
<comment type="similarity">
    <text evidence="5">Belongs to the GSP J family.</text>
</comment>
<accession>A0A4C3GMC1</accession>
<accession>Q8VPC2</accession>
<reference key="1">
    <citation type="journal article" date="2002" name="Proc. Natl. Acad. Sci. U.S.A.">
        <title>Identification of a protein secretory pathway for the secretion of heat-labile enterotoxin by an enterotoxigenic strain of Escherichia coli.</title>
        <authorList>
            <person name="Tauschek M."/>
            <person name="Gorrell R.J."/>
            <person name="Strugnell R.A."/>
            <person name="Robins-Browne R.M."/>
        </authorList>
    </citation>
    <scope>NUCLEOTIDE SEQUENCE [GENOMIC DNA]</scope>
    <source>
        <strain>H10407</strain>
    </source>
</reference>
<reference key="2">
    <citation type="submission" date="2018-04" db="EMBL/GenBank/DDBJ databases">
        <title>Large scale genomics of bovine and human commensal E. coli to reveal the emerging process of EHEC.</title>
        <authorList>
            <person name="Arimizu Y."/>
            <person name="Ogura Y."/>
        </authorList>
    </citation>
    <scope>NUCLEOTIDE SEQUENCE [LARGE SCALE GENOMIC DNA]</scope>
    <source>
        <strain>BE2454</strain>
    </source>
</reference>
<reference key="3">
    <citation type="journal article" date="2008" name="Nat. Struct. Mol. Biol.">
        <title>Structure of the GspK-GspI-GspJ complex from the enterotoxigenic Escherichia coli type 2 secretion system.</title>
        <authorList>
            <person name="Korotkov K.V."/>
            <person name="Hol W.G."/>
        </authorList>
    </citation>
    <scope>X-RAY CRYSTALLOGRAPHY (2.20 ANGSTROMS) OF 26-187</scope>
    <scope>INTERACTION WITH GSPK AND GSPI</scope>
</reference>